<comment type="subunit">
    <text evidence="1">Homodimer and heterodimers.</text>
</comment>
<comment type="subcellular location">
    <subcellularLocation>
        <location evidence="1">Cell membrane</location>
        <topology evidence="1">Multi-pass membrane protein</topology>
    </subcellularLocation>
</comment>
<comment type="similarity">
    <text evidence="3">Belongs to the Casparian strip membrane proteins (CASP) family.</text>
</comment>
<comment type="sequence caution" evidence="3">
    <conflict type="erroneous gene model prediction">
        <sequence resource="EMBL-CDS" id="EES01394"/>
    </conflict>
</comment>
<reference key="1">
    <citation type="journal article" date="2009" name="Nature">
        <title>The Sorghum bicolor genome and the diversification of grasses.</title>
        <authorList>
            <person name="Paterson A.H."/>
            <person name="Bowers J.E."/>
            <person name="Bruggmann R."/>
            <person name="Dubchak I."/>
            <person name="Grimwood J."/>
            <person name="Gundlach H."/>
            <person name="Haberer G."/>
            <person name="Hellsten U."/>
            <person name="Mitros T."/>
            <person name="Poliakov A."/>
            <person name="Schmutz J."/>
            <person name="Spannagl M."/>
            <person name="Tang H."/>
            <person name="Wang X."/>
            <person name="Wicker T."/>
            <person name="Bharti A.K."/>
            <person name="Chapman J."/>
            <person name="Feltus F.A."/>
            <person name="Gowik U."/>
            <person name="Grigoriev I.V."/>
            <person name="Lyons E."/>
            <person name="Maher C.A."/>
            <person name="Martis M."/>
            <person name="Narechania A."/>
            <person name="Otillar R.P."/>
            <person name="Penning B.W."/>
            <person name="Salamov A.A."/>
            <person name="Wang Y."/>
            <person name="Zhang L."/>
            <person name="Carpita N.C."/>
            <person name="Freeling M."/>
            <person name="Gingle A.R."/>
            <person name="Hash C.T."/>
            <person name="Keller B."/>
            <person name="Klein P."/>
            <person name="Kresovich S."/>
            <person name="McCann M.C."/>
            <person name="Ming R."/>
            <person name="Peterson D.G."/>
            <person name="Mehboob-ur-Rahman M."/>
            <person name="Ware D."/>
            <person name="Westhoff P."/>
            <person name="Mayer K.F.X."/>
            <person name="Messing J."/>
            <person name="Rokhsar D.S."/>
        </authorList>
    </citation>
    <scope>NUCLEOTIDE SEQUENCE [LARGE SCALE GENOMIC DNA]</scope>
    <source>
        <strain>cv. BTx623</strain>
    </source>
</reference>
<reference key="2">
    <citation type="journal article" date="2018" name="Plant J.">
        <title>The Sorghum bicolor reference genome: improved assembly, gene annotations, a transcriptome atlas, and signatures of genome organization.</title>
        <authorList>
            <person name="McCormick R.F."/>
            <person name="Truong S.K."/>
            <person name="Sreedasyam A."/>
            <person name="Jenkins J."/>
            <person name="Shu S."/>
            <person name="Sims D."/>
            <person name="Kennedy M."/>
            <person name="Amirebrahimi M."/>
            <person name="Weers B.D."/>
            <person name="McKinley B."/>
            <person name="Mattison A."/>
            <person name="Morishige D.T."/>
            <person name="Grimwood J."/>
            <person name="Schmutz J."/>
            <person name="Mullet J.E."/>
        </authorList>
    </citation>
    <scope>GENOME REANNOTATION</scope>
    <source>
        <strain>cv. BTx623</strain>
    </source>
</reference>
<reference key="3">
    <citation type="submission" date="2000-08" db="EMBL/GenBank/DDBJ databases">
        <title>An EST database from Sorghum: water-stressed plants.</title>
        <authorList>
            <person name="Cordonnier-Pratt M.-M."/>
            <person name="Gingle A."/>
            <person name="Marsala C."/>
            <person name="Sudman M."/>
            <person name="Pratt L.H."/>
        </authorList>
    </citation>
    <scope>NUCLEOTIDE SEQUENCE [LARGE SCALE MRNA] OF 100-211</scope>
</reference>
<reference key="4">
    <citation type="journal article" date="2014" name="Plant Physiol.">
        <title>Functional and evolutionary analysis of the CASPARIAN STRIP MEMBRANE DOMAIN PROTEIN family.</title>
        <authorList>
            <person name="Roppolo D."/>
            <person name="Boeckmann B."/>
            <person name="Pfister A."/>
            <person name="Boutet E."/>
            <person name="Rubio M.C."/>
            <person name="Denervaud-Tendon V."/>
            <person name="Vermeer J.E."/>
            <person name="Gheyselinck J."/>
            <person name="Xenarios I."/>
            <person name="Geldner N."/>
        </authorList>
    </citation>
    <scope>GENE FAMILY</scope>
    <scope>NOMENCLATURE</scope>
</reference>
<accession>C5XIF2</accession>
<name>CSPL2_SORBI</name>
<keyword id="KW-1003">Cell membrane</keyword>
<keyword id="KW-0325">Glycoprotein</keyword>
<keyword id="KW-0472">Membrane</keyword>
<keyword id="KW-1185">Reference proteome</keyword>
<keyword id="KW-0812">Transmembrane</keyword>
<keyword id="KW-1133">Transmembrane helix</keyword>
<gene>
    <name type="ordered locus">Sb03g033320</name>
</gene>
<dbReference type="EMBL" id="CM000762">
    <property type="protein sequence ID" value="EES01394.1"/>
    <property type="status" value="ALT_SEQ"/>
    <property type="molecule type" value="Genomic_DNA"/>
</dbReference>
<dbReference type="EMBL" id="BE592160">
    <property type="status" value="NOT_ANNOTATED_CDS"/>
    <property type="molecule type" value="mRNA"/>
</dbReference>
<dbReference type="SMR" id="C5XIF2"/>
<dbReference type="FunCoup" id="C5XIF2">
    <property type="interactions" value="753"/>
</dbReference>
<dbReference type="STRING" id="4558.C5XIF2"/>
<dbReference type="EnsemblPlants" id="KXG33291">
    <property type="protein sequence ID" value="KXG33291"/>
    <property type="gene ID" value="SORBI_3003G281800"/>
</dbReference>
<dbReference type="Gramene" id="KXG33291">
    <property type="protein sequence ID" value="KXG33291"/>
    <property type="gene ID" value="SORBI_3003G281800"/>
</dbReference>
<dbReference type="KEGG" id="sbi:8059207"/>
<dbReference type="eggNOG" id="ENOG502RN9B">
    <property type="taxonomic scope" value="Eukaryota"/>
</dbReference>
<dbReference type="HOGENOM" id="CLU_2150418_0_0_1"/>
<dbReference type="InParanoid" id="C5XIF2"/>
<dbReference type="OMA" id="CKPLHKF"/>
<dbReference type="OrthoDB" id="1918787at2759"/>
<dbReference type="Proteomes" id="UP000000768">
    <property type="component" value="Chromosome 3"/>
</dbReference>
<dbReference type="ExpressionAtlas" id="C5XIF2">
    <property type="expression patterns" value="baseline and differential"/>
</dbReference>
<dbReference type="GO" id="GO:0005886">
    <property type="term" value="C:plasma membrane"/>
    <property type="evidence" value="ECO:0007669"/>
    <property type="project" value="UniProtKB-SubCell"/>
</dbReference>
<dbReference type="InterPro" id="IPR006459">
    <property type="entry name" value="CASP/CASPL"/>
</dbReference>
<dbReference type="InterPro" id="IPR006702">
    <property type="entry name" value="CASP_dom"/>
</dbReference>
<dbReference type="NCBIfam" id="TIGR01569">
    <property type="entry name" value="A_tha_TIGR01569"/>
    <property type="match status" value="1"/>
</dbReference>
<dbReference type="PANTHER" id="PTHR33573:SF48">
    <property type="entry name" value="CASP-LIKE PROTEIN 3A1"/>
    <property type="match status" value="1"/>
</dbReference>
<dbReference type="PANTHER" id="PTHR33573">
    <property type="entry name" value="CASP-LIKE PROTEIN 4A4"/>
    <property type="match status" value="1"/>
</dbReference>
<dbReference type="Pfam" id="PF04535">
    <property type="entry name" value="CASP_dom"/>
    <property type="match status" value="1"/>
</dbReference>
<evidence type="ECO:0000250" key="1"/>
<evidence type="ECO:0000255" key="2"/>
<evidence type="ECO:0000305" key="3"/>
<protein>
    <recommendedName>
        <fullName>CASP-like protein 3A1</fullName>
        <shortName>SbCASPL3A1</shortName>
    </recommendedName>
</protein>
<feature type="chain" id="PRO_0000412061" description="CASP-like protein 3A1">
    <location>
        <begin position="1"/>
        <end position="211"/>
    </location>
</feature>
<feature type="topological domain" description="Cytoplasmic" evidence="2">
    <location>
        <begin position="1"/>
        <end position="45"/>
    </location>
</feature>
<feature type="transmembrane region" description="Helical" evidence="2">
    <location>
        <begin position="46"/>
        <end position="66"/>
    </location>
</feature>
<feature type="topological domain" description="Extracellular" evidence="2">
    <location>
        <begin position="67"/>
        <end position="95"/>
    </location>
</feature>
<feature type="transmembrane region" description="Helical" evidence="2">
    <location>
        <begin position="96"/>
        <end position="116"/>
    </location>
</feature>
<feature type="topological domain" description="Cytoplasmic" evidence="2">
    <location>
        <begin position="117"/>
        <end position="131"/>
    </location>
</feature>
<feature type="transmembrane region" description="Helical" evidence="2">
    <location>
        <begin position="132"/>
        <end position="152"/>
    </location>
</feature>
<feature type="topological domain" description="Extracellular" evidence="2">
    <location>
        <begin position="153"/>
        <end position="186"/>
    </location>
</feature>
<feature type="transmembrane region" description="Helical" evidence="2">
    <location>
        <begin position="187"/>
        <end position="207"/>
    </location>
</feature>
<feature type="topological domain" description="Cytoplasmic" evidence="2">
    <location>
        <begin position="208"/>
        <end position="211"/>
    </location>
</feature>
<feature type="glycosylation site" description="N-linked (GlcNAc...) asparagine" evidence="2">
    <location>
        <position position="87"/>
    </location>
</feature>
<feature type="glycosylation site" description="N-linked (GlcNAc...) asparagine" evidence="2">
    <location>
        <position position="160"/>
    </location>
</feature>
<organism>
    <name type="scientific">Sorghum bicolor</name>
    <name type="common">Sorghum</name>
    <name type="synonym">Sorghum vulgare</name>
    <dbReference type="NCBI Taxonomy" id="4558"/>
    <lineage>
        <taxon>Eukaryota</taxon>
        <taxon>Viridiplantae</taxon>
        <taxon>Streptophyta</taxon>
        <taxon>Embryophyta</taxon>
        <taxon>Tracheophyta</taxon>
        <taxon>Spermatophyta</taxon>
        <taxon>Magnoliopsida</taxon>
        <taxon>Liliopsida</taxon>
        <taxon>Poales</taxon>
        <taxon>Poaceae</taxon>
        <taxon>PACMAD clade</taxon>
        <taxon>Panicoideae</taxon>
        <taxon>Andropogonodae</taxon>
        <taxon>Andropogoneae</taxon>
        <taxon>Sorghinae</taxon>
        <taxon>Sorghum</taxon>
    </lineage>
</organism>
<sequence length="211" mass="22365">MGSIGNGRSDSVVGIQMPPAGSKMVLEPEALQVTTSPVPRWPRLGVVMVATRAVAMVMALLSMSLMVSSKQRGILTIFGIEIPLDANWSFSYSLQFLVAMSTASAAYSLAQLLLIAHKAVKKSPIVPSRRHAWLLFAGDQVFSLAMMSAGSAAAAVANLNRTGIRHTALPNFCKPLPRFCDLSAVSIACAFLSCVFLAASAVIDVIWLSSP</sequence>
<proteinExistence type="evidence at transcript level"/>